<proteinExistence type="inferred from homology"/>
<accession>B7LCP7</accession>
<dbReference type="EC" id="6.3.5.2" evidence="1"/>
<dbReference type="EMBL" id="CU928145">
    <property type="protein sequence ID" value="CAU98665.1"/>
    <property type="molecule type" value="Genomic_DNA"/>
</dbReference>
<dbReference type="RefSeq" id="WP_000138282.1">
    <property type="nucleotide sequence ID" value="NZ_CP028304.1"/>
</dbReference>
<dbReference type="SMR" id="B7LCP7"/>
<dbReference type="MEROPS" id="C26.957"/>
<dbReference type="GeneID" id="75172615"/>
<dbReference type="KEGG" id="eck:EC55989_2792"/>
<dbReference type="HOGENOM" id="CLU_014340_0_5_6"/>
<dbReference type="UniPathway" id="UPA00189">
    <property type="reaction ID" value="UER00296"/>
</dbReference>
<dbReference type="Proteomes" id="UP000000746">
    <property type="component" value="Chromosome"/>
</dbReference>
<dbReference type="GO" id="GO:0005829">
    <property type="term" value="C:cytosol"/>
    <property type="evidence" value="ECO:0007669"/>
    <property type="project" value="TreeGrafter"/>
</dbReference>
<dbReference type="GO" id="GO:0005524">
    <property type="term" value="F:ATP binding"/>
    <property type="evidence" value="ECO:0007669"/>
    <property type="project" value="UniProtKB-UniRule"/>
</dbReference>
<dbReference type="GO" id="GO:0003921">
    <property type="term" value="F:GMP synthase activity"/>
    <property type="evidence" value="ECO:0007669"/>
    <property type="project" value="InterPro"/>
</dbReference>
<dbReference type="CDD" id="cd01742">
    <property type="entry name" value="GATase1_GMP_Synthase"/>
    <property type="match status" value="1"/>
</dbReference>
<dbReference type="CDD" id="cd01997">
    <property type="entry name" value="GMP_synthase_C"/>
    <property type="match status" value="1"/>
</dbReference>
<dbReference type="FunFam" id="3.30.300.10:FF:000002">
    <property type="entry name" value="GMP synthase [glutamine-hydrolyzing]"/>
    <property type="match status" value="1"/>
</dbReference>
<dbReference type="FunFam" id="3.40.50.620:FF:000001">
    <property type="entry name" value="GMP synthase [glutamine-hydrolyzing]"/>
    <property type="match status" value="1"/>
</dbReference>
<dbReference type="FunFam" id="3.40.50.880:FF:000001">
    <property type="entry name" value="GMP synthase [glutamine-hydrolyzing]"/>
    <property type="match status" value="1"/>
</dbReference>
<dbReference type="Gene3D" id="3.30.300.10">
    <property type="match status" value="1"/>
</dbReference>
<dbReference type="Gene3D" id="3.40.50.880">
    <property type="match status" value="1"/>
</dbReference>
<dbReference type="Gene3D" id="3.40.50.620">
    <property type="entry name" value="HUPs"/>
    <property type="match status" value="1"/>
</dbReference>
<dbReference type="HAMAP" id="MF_00344">
    <property type="entry name" value="GMP_synthase"/>
    <property type="match status" value="1"/>
</dbReference>
<dbReference type="InterPro" id="IPR029062">
    <property type="entry name" value="Class_I_gatase-like"/>
</dbReference>
<dbReference type="InterPro" id="IPR017926">
    <property type="entry name" value="GATASE"/>
</dbReference>
<dbReference type="InterPro" id="IPR001674">
    <property type="entry name" value="GMP_synth_C"/>
</dbReference>
<dbReference type="InterPro" id="IPR004739">
    <property type="entry name" value="GMP_synth_GATase"/>
</dbReference>
<dbReference type="InterPro" id="IPR022955">
    <property type="entry name" value="GMP_synthase"/>
</dbReference>
<dbReference type="InterPro" id="IPR025777">
    <property type="entry name" value="GMPS_ATP_PPase_dom"/>
</dbReference>
<dbReference type="InterPro" id="IPR022310">
    <property type="entry name" value="NAD/GMP_synthase"/>
</dbReference>
<dbReference type="InterPro" id="IPR014729">
    <property type="entry name" value="Rossmann-like_a/b/a_fold"/>
</dbReference>
<dbReference type="NCBIfam" id="TIGR00884">
    <property type="entry name" value="guaA_Cterm"/>
    <property type="match status" value="1"/>
</dbReference>
<dbReference type="NCBIfam" id="TIGR00888">
    <property type="entry name" value="guaA_Nterm"/>
    <property type="match status" value="1"/>
</dbReference>
<dbReference type="NCBIfam" id="NF000848">
    <property type="entry name" value="PRK00074.1"/>
    <property type="match status" value="1"/>
</dbReference>
<dbReference type="PANTHER" id="PTHR11922:SF2">
    <property type="entry name" value="GMP SYNTHASE [GLUTAMINE-HYDROLYZING]"/>
    <property type="match status" value="1"/>
</dbReference>
<dbReference type="PANTHER" id="PTHR11922">
    <property type="entry name" value="GMP SYNTHASE-RELATED"/>
    <property type="match status" value="1"/>
</dbReference>
<dbReference type="Pfam" id="PF00117">
    <property type="entry name" value="GATase"/>
    <property type="match status" value="1"/>
</dbReference>
<dbReference type="Pfam" id="PF00958">
    <property type="entry name" value="GMP_synt_C"/>
    <property type="match status" value="1"/>
</dbReference>
<dbReference type="Pfam" id="PF02540">
    <property type="entry name" value="NAD_synthase"/>
    <property type="match status" value="1"/>
</dbReference>
<dbReference type="PRINTS" id="PR00097">
    <property type="entry name" value="ANTSNTHASEII"/>
</dbReference>
<dbReference type="PRINTS" id="PR00099">
    <property type="entry name" value="CPSGATASE"/>
</dbReference>
<dbReference type="PRINTS" id="PR00096">
    <property type="entry name" value="GATASE"/>
</dbReference>
<dbReference type="SUPFAM" id="SSF52402">
    <property type="entry name" value="Adenine nucleotide alpha hydrolases-like"/>
    <property type="match status" value="1"/>
</dbReference>
<dbReference type="SUPFAM" id="SSF52317">
    <property type="entry name" value="Class I glutamine amidotransferase-like"/>
    <property type="match status" value="1"/>
</dbReference>
<dbReference type="SUPFAM" id="SSF54810">
    <property type="entry name" value="GMP synthetase C-terminal dimerisation domain"/>
    <property type="match status" value="1"/>
</dbReference>
<dbReference type="PROSITE" id="PS51273">
    <property type="entry name" value="GATASE_TYPE_1"/>
    <property type="match status" value="1"/>
</dbReference>
<dbReference type="PROSITE" id="PS51553">
    <property type="entry name" value="GMPS_ATP_PPASE"/>
    <property type="match status" value="1"/>
</dbReference>
<feature type="chain" id="PRO_1000190236" description="GMP synthase [glutamine-hydrolyzing]">
    <location>
        <begin position="1"/>
        <end position="525"/>
    </location>
</feature>
<feature type="domain" description="Glutamine amidotransferase type-1" evidence="1">
    <location>
        <begin position="9"/>
        <end position="207"/>
    </location>
</feature>
<feature type="domain" description="GMPS ATP-PPase" evidence="1">
    <location>
        <begin position="208"/>
        <end position="400"/>
    </location>
</feature>
<feature type="active site" description="Nucleophile" evidence="1">
    <location>
        <position position="86"/>
    </location>
</feature>
<feature type="active site" evidence="1">
    <location>
        <position position="181"/>
    </location>
</feature>
<feature type="active site" evidence="1">
    <location>
        <position position="183"/>
    </location>
</feature>
<feature type="binding site" evidence="1">
    <location>
        <begin position="235"/>
        <end position="241"/>
    </location>
    <ligand>
        <name>ATP</name>
        <dbReference type="ChEBI" id="CHEBI:30616"/>
    </ligand>
</feature>
<keyword id="KW-0067">ATP-binding</keyword>
<keyword id="KW-0315">Glutamine amidotransferase</keyword>
<keyword id="KW-0332">GMP biosynthesis</keyword>
<keyword id="KW-0436">Ligase</keyword>
<keyword id="KW-0547">Nucleotide-binding</keyword>
<keyword id="KW-0658">Purine biosynthesis</keyword>
<keyword id="KW-1185">Reference proteome</keyword>
<organism>
    <name type="scientific">Escherichia coli (strain 55989 / EAEC)</name>
    <dbReference type="NCBI Taxonomy" id="585055"/>
    <lineage>
        <taxon>Bacteria</taxon>
        <taxon>Pseudomonadati</taxon>
        <taxon>Pseudomonadota</taxon>
        <taxon>Gammaproteobacteria</taxon>
        <taxon>Enterobacterales</taxon>
        <taxon>Enterobacteriaceae</taxon>
        <taxon>Escherichia</taxon>
    </lineage>
</organism>
<evidence type="ECO:0000255" key="1">
    <source>
        <dbReference type="HAMAP-Rule" id="MF_00344"/>
    </source>
</evidence>
<protein>
    <recommendedName>
        <fullName evidence="1">GMP synthase [glutamine-hydrolyzing]</fullName>
        <ecNumber evidence="1">6.3.5.2</ecNumber>
    </recommendedName>
    <alternativeName>
        <fullName evidence="1">GMP synthetase</fullName>
    </alternativeName>
    <alternativeName>
        <fullName evidence="1">Glutamine amidotransferase</fullName>
    </alternativeName>
</protein>
<comment type="function">
    <text evidence="1">Catalyzes the synthesis of GMP from XMP.</text>
</comment>
<comment type="catalytic activity">
    <reaction evidence="1">
        <text>XMP + L-glutamine + ATP + H2O = GMP + L-glutamate + AMP + diphosphate + 2 H(+)</text>
        <dbReference type="Rhea" id="RHEA:11680"/>
        <dbReference type="ChEBI" id="CHEBI:15377"/>
        <dbReference type="ChEBI" id="CHEBI:15378"/>
        <dbReference type="ChEBI" id="CHEBI:29985"/>
        <dbReference type="ChEBI" id="CHEBI:30616"/>
        <dbReference type="ChEBI" id="CHEBI:33019"/>
        <dbReference type="ChEBI" id="CHEBI:57464"/>
        <dbReference type="ChEBI" id="CHEBI:58115"/>
        <dbReference type="ChEBI" id="CHEBI:58359"/>
        <dbReference type="ChEBI" id="CHEBI:456215"/>
        <dbReference type="EC" id="6.3.5.2"/>
    </reaction>
</comment>
<comment type="pathway">
    <text evidence="1">Purine metabolism; GMP biosynthesis; GMP from XMP (L-Gln route): step 1/1.</text>
</comment>
<comment type="subunit">
    <text evidence="1">Homodimer.</text>
</comment>
<reference key="1">
    <citation type="journal article" date="2009" name="PLoS Genet.">
        <title>Organised genome dynamics in the Escherichia coli species results in highly diverse adaptive paths.</title>
        <authorList>
            <person name="Touchon M."/>
            <person name="Hoede C."/>
            <person name="Tenaillon O."/>
            <person name="Barbe V."/>
            <person name="Baeriswyl S."/>
            <person name="Bidet P."/>
            <person name="Bingen E."/>
            <person name="Bonacorsi S."/>
            <person name="Bouchier C."/>
            <person name="Bouvet O."/>
            <person name="Calteau A."/>
            <person name="Chiapello H."/>
            <person name="Clermont O."/>
            <person name="Cruveiller S."/>
            <person name="Danchin A."/>
            <person name="Diard M."/>
            <person name="Dossat C."/>
            <person name="Karoui M.E."/>
            <person name="Frapy E."/>
            <person name="Garry L."/>
            <person name="Ghigo J.M."/>
            <person name="Gilles A.M."/>
            <person name="Johnson J."/>
            <person name="Le Bouguenec C."/>
            <person name="Lescat M."/>
            <person name="Mangenot S."/>
            <person name="Martinez-Jehanne V."/>
            <person name="Matic I."/>
            <person name="Nassif X."/>
            <person name="Oztas S."/>
            <person name="Petit M.A."/>
            <person name="Pichon C."/>
            <person name="Rouy Z."/>
            <person name="Ruf C.S."/>
            <person name="Schneider D."/>
            <person name="Tourret J."/>
            <person name="Vacherie B."/>
            <person name="Vallenet D."/>
            <person name="Medigue C."/>
            <person name="Rocha E.P.C."/>
            <person name="Denamur E."/>
        </authorList>
    </citation>
    <scope>NUCLEOTIDE SEQUENCE [LARGE SCALE GENOMIC DNA]</scope>
    <source>
        <strain>55989 / EAEC</strain>
    </source>
</reference>
<sequence>MTENIHKHRILILDFGSQYTQLVARRVRELGVYCELWAWDVTEAQIRDFNPSGIILSGGPESTTEENSPRAPQYVFEAGVPVFGVCYGMQTMAMQLGGHVEASNEREFGYAQVEVVNDSALVRGIEDALTADGKPLLDVWMSHGDKVTAIPSDFVTVASTESCPFAIMANEEKRFYGVQFHPEVTHTRQGMRMLERFVRDICQCEALWTPAKIIDDAVARIREQVGDDKVILGLSGGVDSSVTAMLLHRAIGKNLTCVFVDNGLLRLNEAEQVLDMFGDHFGLNIVHVPAEDRFLSALAGENDPEAKRKIIGRVFVEVFDEEALKLEDVKWLAQGTIYPDVIESAASATGKAHVIKSHHNVGGLPKEMKMGLVEPLKELFKDEVRKIGLELGLPYDMLYRHPFPGPGLGVRVLGEVKKEYCDLLRRADAIFIEELRKADLYDKVSQAFTVFLPVRSVGVMGDGRKYDWVVSLRAVETIDFMTAHWAHLPYDFLGRVSNRIINEVNGISRVVYDISGKPPATIEWE</sequence>
<gene>
    <name evidence="1" type="primary">guaA</name>
    <name type="ordered locus">EC55989_2792</name>
</gene>
<name>GUAA_ECO55</name>